<evidence type="ECO:0000255" key="1">
    <source>
        <dbReference type="HAMAP-Rule" id="MF_00001"/>
    </source>
</evidence>
<dbReference type="EC" id="2.1.3.2" evidence="1"/>
<dbReference type="EMBL" id="CP000931">
    <property type="protein sequence ID" value="ABZ77600.1"/>
    <property type="molecule type" value="Genomic_DNA"/>
</dbReference>
<dbReference type="RefSeq" id="WP_012278126.1">
    <property type="nucleotide sequence ID" value="NC_010334.1"/>
</dbReference>
<dbReference type="SMR" id="B0TPF3"/>
<dbReference type="STRING" id="458817.Shal_3052"/>
<dbReference type="KEGG" id="shl:Shal_3052"/>
<dbReference type="eggNOG" id="COG0540">
    <property type="taxonomic scope" value="Bacteria"/>
</dbReference>
<dbReference type="HOGENOM" id="CLU_043846_1_2_6"/>
<dbReference type="OrthoDB" id="9774690at2"/>
<dbReference type="UniPathway" id="UPA00070">
    <property type="reaction ID" value="UER00116"/>
</dbReference>
<dbReference type="Proteomes" id="UP000001317">
    <property type="component" value="Chromosome"/>
</dbReference>
<dbReference type="GO" id="GO:0005829">
    <property type="term" value="C:cytosol"/>
    <property type="evidence" value="ECO:0007669"/>
    <property type="project" value="TreeGrafter"/>
</dbReference>
<dbReference type="GO" id="GO:0016597">
    <property type="term" value="F:amino acid binding"/>
    <property type="evidence" value="ECO:0007669"/>
    <property type="project" value="InterPro"/>
</dbReference>
<dbReference type="GO" id="GO:0004070">
    <property type="term" value="F:aspartate carbamoyltransferase activity"/>
    <property type="evidence" value="ECO:0007669"/>
    <property type="project" value="UniProtKB-UniRule"/>
</dbReference>
<dbReference type="GO" id="GO:0006207">
    <property type="term" value="P:'de novo' pyrimidine nucleobase biosynthetic process"/>
    <property type="evidence" value="ECO:0007669"/>
    <property type="project" value="InterPro"/>
</dbReference>
<dbReference type="GO" id="GO:0044205">
    <property type="term" value="P:'de novo' UMP biosynthetic process"/>
    <property type="evidence" value="ECO:0007669"/>
    <property type="project" value="UniProtKB-UniRule"/>
</dbReference>
<dbReference type="GO" id="GO:0006520">
    <property type="term" value="P:amino acid metabolic process"/>
    <property type="evidence" value="ECO:0007669"/>
    <property type="project" value="InterPro"/>
</dbReference>
<dbReference type="FunFam" id="3.40.50.1370:FF:000001">
    <property type="entry name" value="Aspartate carbamoyltransferase"/>
    <property type="match status" value="1"/>
</dbReference>
<dbReference type="FunFam" id="3.40.50.1370:FF:000002">
    <property type="entry name" value="Aspartate carbamoyltransferase 2"/>
    <property type="match status" value="1"/>
</dbReference>
<dbReference type="Gene3D" id="3.40.50.1370">
    <property type="entry name" value="Aspartate/ornithine carbamoyltransferase"/>
    <property type="match status" value="2"/>
</dbReference>
<dbReference type="HAMAP" id="MF_00001">
    <property type="entry name" value="Asp_carb_tr"/>
    <property type="match status" value="1"/>
</dbReference>
<dbReference type="InterPro" id="IPR006132">
    <property type="entry name" value="Asp/Orn_carbamoyltranf_P-bd"/>
</dbReference>
<dbReference type="InterPro" id="IPR006130">
    <property type="entry name" value="Asp/Orn_carbamoylTrfase"/>
</dbReference>
<dbReference type="InterPro" id="IPR036901">
    <property type="entry name" value="Asp/Orn_carbamoylTrfase_sf"/>
</dbReference>
<dbReference type="InterPro" id="IPR002082">
    <property type="entry name" value="Asp_carbamoyltransf"/>
</dbReference>
<dbReference type="InterPro" id="IPR006131">
    <property type="entry name" value="Asp_carbamoyltransf_Asp/Orn-bd"/>
</dbReference>
<dbReference type="NCBIfam" id="TIGR00670">
    <property type="entry name" value="asp_carb_tr"/>
    <property type="match status" value="1"/>
</dbReference>
<dbReference type="NCBIfam" id="NF002032">
    <property type="entry name" value="PRK00856.1"/>
    <property type="match status" value="1"/>
</dbReference>
<dbReference type="PANTHER" id="PTHR45753:SF6">
    <property type="entry name" value="ASPARTATE CARBAMOYLTRANSFERASE"/>
    <property type="match status" value="1"/>
</dbReference>
<dbReference type="PANTHER" id="PTHR45753">
    <property type="entry name" value="ORNITHINE CARBAMOYLTRANSFERASE, MITOCHONDRIAL"/>
    <property type="match status" value="1"/>
</dbReference>
<dbReference type="Pfam" id="PF00185">
    <property type="entry name" value="OTCace"/>
    <property type="match status" value="1"/>
</dbReference>
<dbReference type="Pfam" id="PF02729">
    <property type="entry name" value="OTCace_N"/>
    <property type="match status" value="1"/>
</dbReference>
<dbReference type="PRINTS" id="PR00100">
    <property type="entry name" value="AOTCASE"/>
</dbReference>
<dbReference type="PRINTS" id="PR00101">
    <property type="entry name" value="ATCASE"/>
</dbReference>
<dbReference type="SUPFAM" id="SSF53671">
    <property type="entry name" value="Aspartate/ornithine carbamoyltransferase"/>
    <property type="match status" value="1"/>
</dbReference>
<dbReference type="PROSITE" id="PS00097">
    <property type="entry name" value="CARBAMOYLTRANSFERASE"/>
    <property type="match status" value="1"/>
</dbReference>
<proteinExistence type="inferred from homology"/>
<keyword id="KW-0665">Pyrimidine biosynthesis</keyword>
<keyword id="KW-0808">Transferase</keyword>
<feature type="chain" id="PRO_0000334595" description="Aspartate carbamoyltransferase catalytic subunit 3">
    <location>
        <begin position="1"/>
        <end position="310"/>
    </location>
</feature>
<feature type="binding site" evidence="1">
    <location>
        <position position="55"/>
    </location>
    <ligand>
        <name>carbamoyl phosphate</name>
        <dbReference type="ChEBI" id="CHEBI:58228"/>
    </ligand>
</feature>
<feature type="binding site" evidence="1">
    <location>
        <position position="56"/>
    </location>
    <ligand>
        <name>carbamoyl phosphate</name>
        <dbReference type="ChEBI" id="CHEBI:58228"/>
    </ligand>
</feature>
<feature type="binding site" evidence="1">
    <location>
        <position position="85"/>
    </location>
    <ligand>
        <name>L-aspartate</name>
        <dbReference type="ChEBI" id="CHEBI:29991"/>
    </ligand>
</feature>
<feature type="binding site" evidence="1">
    <location>
        <position position="106"/>
    </location>
    <ligand>
        <name>carbamoyl phosphate</name>
        <dbReference type="ChEBI" id="CHEBI:58228"/>
    </ligand>
</feature>
<feature type="binding site" evidence="1">
    <location>
        <position position="134"/>
    </location>
    <ligand>
        <name>carbamoyl phosphate</name>
        <dbReference type="ChEBI" id="CHEBI:58228"/>
    </ligand>
</feature>
<feature type="binding site" evidence="1">
    <location>
        <position position="137"/>
    </location>
    <ligand>
        <name>carbamoyl phosphate</name>
        <dbReference type="ChEBI" id="CHEBI:58228"/>
    </ligand>
</feature>
<feature type="binding site" evidence="1">
    <location>
        <position position="167"/>
    </location>
    <ligand>
        <name>L-aspartate</name>
        <dbReference type="ChEBI" id="CHEBI:29991"/>
    </ligand>
</feature>
<feature type="binding site" evidence="1">
    <location>
        <position position="228"/>
    </location>
    <ligand>
        <name>L-aspartate</name>
        <dbReference type="ChEBI" id="CHEBI:29991"/>
    </ligand>
</feature>
<feature type="binding site" evidence="1">
    <location>
        <position position="266"/>
    </location>
    <ligand>
        <name>carbamoyl phosphate</name>
        <dbReference type="ChEBI" id="CHEBI:58228"/>
    </ligand>
</feature>
<feature type="binding site" evidence="1">
    <location>
        <position position="267"/>
    </location>
    <ligand>
        <name>carbamoyl phosphate</name>
        <dbReference type="ChEBI" id="CHEBI:58228"/>
    </ligand>
</feature>
<organism>
    <name type="scientific">Shewanella halifaxensis (strain HAW-EB4)</name>
    <dbReference type="NCBI Taxonomy" id="458817"/>
    <lineage>
        <taxon>Bacteria</taxon>
        <taxon>Pseudomonadati</taxon>
        <taxon>Pseudomonadota</taxon>
        <taxon>Gammaproteobacteria</taxon>
        <taxon>Alteromonadales</taxon>
        <taxon>Shewanellaceae</taxon>
        <taxon>Shewanella</taxon>
    </lineage>
</organism>
<accession>B0TPF3</accession>
<comment type="function">
    <text evidence="1">Catalyzes the condensation of carbamoyl phosphate and aspartate to form carbamoyl aspartate and inorganic phosphate, the committed step in the de novo pyrimidine nucleotide biosynthesis pathway.</text>
</comment>
<comment type="catalytic activity">
    <reaction evidence="1">
        <text>carbamoyl phosphate + L-aspartate = N-carbamoyl-L-aspartate + phosphate + H(+)</text>
        <dbReference type="Rhea" id="RHEA:20013"/>
        <dbReference type="ChEBI" id="CHEBI:15378"/>
        <dbReference type="ChEBI" id="CHEBI:29991"/>
        <dbReference type="ChEBI" id="CHEBI:32814"/>
        <dbReference type="ChEBI" id="CHEBI:43474"/>
        <dbReference type="ChEBI" id="CHEBI:58228"/>
        <dbReference type="EC" id="2.1.3.2"/>
    </reaction>
</comment>
<comment type="pathway">
    <text evidence="1">Pyrimidine metabolism; UMP biosynthesis via de novo pathway; (S)-dihydroorotate from bicarbonate: step 2/3.</text>
</comment>
<comment type="subunit">
    <text evidence="1">Heterododecamer (2C3:3R2) of six catalytic PyrB chains organized as two trimers (C3), and six regulatory PyrI chains organized as three dimers (R2).</text>
</comment>
<comment type="similarity">
    <text evidence="1">Belongs to the aspartate/ornithine carbamoyltransferase superfamily. ATCase family.</text>
</comment>
<protein>
    <recommendedName>
        <fullName evidence="1">Aspartate carbamoyltransferase catalytic subunit 3</fullName>
        <ecNumber evidence="1">2.1.3.2</ecNumber>
    </recommendedName>
    <alternativeName>
        <fullName evidence="1">Aspartate transcarbamylase 3</fullName>
        <shortName evidence="1">ATCase 3</shortName>
    </alternativeName>
</protein>
<name>PYRB3_SHEHH</name>
<gene>
    <name evidence="1" type="primary">pyrB3</name>
    <name type="ordered locus">Shal_3052</name>
</gene>
<sequence>MSNPIYNKHIISISDLSRSELELIVSTANDLKQNPRPDLLKNKVVASCFFEASTRTRLSFETAVQRLGGSVIGFPDSGNTSLGKKGETLADSVQVISSYCDAFFMRHNQEGAARLASEFSSAPVINGGDGSNQHPTQTLLDLFSIYETQGTLEKLQVAFVGDLKYGRTVHSLTQALSLFDCEFHFIAPAALSMPDYIIDELKAKGCKYTLHDHLDGVLPNLDILYMTRVQKERFDETEYQHLKSSFILNANMLEGVKENLKVLHPLPRIDEITTDVDSTPYAYYFQQAKNGVYARQALLALVLTNEFGDK</sequence>
<reference key="1">
    <citation type="submission" date="2008-01" db="EMBL/GenBank/DDBJ databases">
        <title>Complete sequence of Shewanella halifaxensis HAW-EB4.</title>
        <authorList>
            <consortium name="US DOE Joint Genome Institute"/>
            <person name="Copeland A."/>
            <person name="Lucas S."/>
            <person name="Lapidus A."/>
            <person name="Glavina del Rio T."/>
            <person name="Dalin E."/>
            <person name="Tice H."/>
            <person name="Bruce D."/>
            <person name="Goodwin L."/>
            <person name="Pitluck S."/>
            <person name="Sims D."/>
            <person name="Brettin T."/>
            <person name="Detter J.C."/>
            <person name="Han C."/>
            <person name="Kuske C.R."/>
            <person name="Schmutz J."/>
            <person name="Larimer F."/>
            <person name="Land M."/>
            <person name="Hauser L."/>
            <person name="Kyrpides N."/>
            <person name="Kim E."/>
            <person name="Zhao J.-S."/>
            <person name="Richardson P."/>
        </authorList>
    </citation>
    <scope>NUCLEOTIDE SEQUENCE [LARGE SCALE GENOMIC DNA]</scope>
    <source>
        <strain>HAW-EB4</strain>
    </source>
</reference>